<reference key="1">
    <citation type="submission" date="2006-12" db="EMBL/GenBank/DDBJ databases">
        <title>Complete sequence of Pyrobaculum islandicum DSM 4184.</title>
        <authorList>
            <person name="Copeland A."/>
            <person name="Lucas S."/>
            <person name="Lapidus A."/>
            <person name="Barry K."/>
            <person name="Detter J.C."/>
            <person name="Glavina del Rio T."/>
            <person name="Dalin E."/>
            <person name="Tice H."/>
            <person name="Pitluck S."/>
            <person name="Meincke L."/>
            <person name="Brettin T."/>
            <person name="Bruce D."/>
            <person name="Han C."/>
            <person name="Tapia R."/>
            <person name="Gilna P."/>
            <person name="Schmutz J."/>
            <person name="Larimer F."/>
            <person name="Land M."/>
            <person name="Hauser L."/>
            <person name="Kyrpides N."/>
            <person name="Mikhailova N."/>
            <person name="Cozen A.E."/>
            <person name="Fitz-Gibbon S.T."/>
            <person name="House C.H."/>
            <person name="Saltikov C."/>
            <person name="Lowe T."/>
            <person name="Richardson P."/>
        </authorList>
    </citation>
    <scope>NUCLEOTIDE SEQUENCE [LARGE SCALE GENOMIC DNA]</scope>
    <source>
        <strain>DSM 4184 / JCM 9189 / GEO3</strain>
    </source>
</reference>
<feature type="chain" id="PRO_1000061332" description="Flap endonuclease 1">
    <location>
        <begin position="1"/>
        <end position="346"/>
    </location>
</feature>
<feature type="region of interest" description="N-domain">
    <location>
        <begin position="1"/>
        <end position="102"/>
    </location>
</feature>
<feature type="region of interest" description="I-domain">
    <location>
        <begin position="120"/>
        <end position="261"/>
    </location>
</feature>
<feature type="binding site" evidence="2">
    <location>
        <position position="31"/>
    </location>
    <ligand>
        <name>Mg(2+)</name>
        <dbReference type="ChEBI" id="CHEBI:18420"/>
        <label>1</label>
    </ligand>
</feature>
<feature type="binding site" evidence="2">
    <location>
        <position position="84"/>
    </location>
    <ligand>
        <name>Mg(2+)</name>
        <dbReference type="ChEBI" id="CHEBI:18420"/>
        <label>1</label>
    </ligand>
</feature>
<feature type="binding site" evidence="2">
    <location>
        <position position="156"/>
    </location>
    <ligand>
        <name>Mg(2+)</name>
        <dbReference type="ChEBI" id="CHEBI:18420"/>
        <label>1</label>
    </ligand>
</feature>
<feature type="binding site" evidence="2">
    <location>
        <position position="158"/>
    </location>
    <ligand>
        <name>Mg(2+)</name>
        <dbReference type="ChEBI" id="CHEBI:18420"/>
        <label>1</label>
    </ligand>
</feature>
<feature type="binding site" evidence="2">
    <location>
        <position position="177"/>
    </location>
    <ligand>
        <name>Mg(2+)</name>
        <dbReference type="ChEBI" id="CHEBI:18420"/>
        <label>2</label>
    </ligand>
</feature>
<feature type="binding site" evidence="2">
    <location>
        <position position="179"/>
    </location>
    <ligand>
        <name>Mg(2+)</name>
        <dbReference type="ChEBI" id="CHEBI:18420"/>
        <label>2</label>
    </ligand>
</feature>
<feature type="binding site" evidence="2">
    <location>
        <position position="239"/>
    </location>
    <ligand>
        <name>Mg(2+)</name>
        <dbReference type="ChEBI" id="CHEBI:18420"/>
        <label>2</label>
    </ligand>
</feature>
<organism>
    <name type="scientific">Pyrobaculum islandicum (strain DSM 4184 / JCM 9189 / GEO3)</name>
    <dbReference type="NCBI Taxonomy" id="384616"/>
    <lineage>
        <taxon>Archaea</taxon>
        <taxon>Thermoproteota</taxon>
        <taxon>Thermoprotei</taxon>
        <taxon>Thermoproteales</taxon>
        <taxon>Thermoproteaceae</taxon>
        <taxon>Pyrobaculum</taxon>
    </lineage>
</organism>
<name>FEN_PYRIL</name>
<accession>A1RSC7</accession>
<protein>
    <recommendedName>
        <fullName evidence="2">Flap endonuclease 1</fullName>
        <shortName evidence="2">FEN-1</shortName>
        <ecNumber evidence="2">3.1.-.-</ecNumber>
    </recommendedName>
    <alternativeName>
        <fullName evidence="2">Flap structure-specific endonuclease 1</fullName>
    </alternativeName>
</protein>
<evidence type="ECO:0000250" key="1"/>
<evidence type="ECO:0000255" key="2">
    <source>
        <dbReference type="HAMAP-Rule" id="MF_00614"/>
    </source>
</evidence>
<dbReference type="EC" id="3.1.-.-" evidence="2"/>
<dbReference type="EMBL" id="CP000504">
    <property type="protein sequence ID" value="ABL87859.1"/>
    <property type="molecule type" value="Genomic_DNA"/>
</dbReference>
<dbReference type="RefSeq" id="WP_011762435.1">
    <property type="nucleotide sequence ID" value="NC_008701.1"/>
</dbReference>
<dbReference type="SMR" id="A1RSC7"/>
<dbReference type="STRING" id="384616.Pisl_0681"/>
<dbReference type="GeneID" id="4616401"/>
<dbReference type="KEGG" id="pis:Pisl_0681"/>
<dbReference type="eggNOG" id="arCOG04050">
    <property type="taxonomic scope" value="Archaea"/>
</dbReference>
<dbReference type="HOGENOM" id="CLU_032444_0_0_2"/>
<dbReference type="OrthoDB" id="9593at2157"/>
<dbReference type="Proteomes" id="UP000002595">
    <property type="component" value="Chromosome"/>
</dbReference>
<dbReference type="GO" id="GO:0008409">
    <property type="term" value="F:5'-3' exonuclease activity"/>
    <property type="evidence" value="ECO:0007669"/>
    <property type="project" value="UniProtKB-UniRule"/>
</dbReference>
<dbReference type="GO" id="GO:0017108">
    <property type="term" value="F:5'-flap endonuclease activity"/>
    <property type="evidence" value="ECO:0007669"/>
    <property type="project" value="UniProtKB-UniRule"/>
</dbReference>
<dbReference type="GO" id="GO:0003677">
    <property type="term" value="F:DNA binding"/>
    <property type="evidence" value="ECO:0007669"/>
    <property type="project" value="UniProtKB-UniRule"/>
</dbReference>
<dbReference type="GO" id="GO:0000287">
    <property type="term" value="F:magnesium ion binding"/>
    <property type="evidence" value="ECO:0007669"/>
    <property type="project" value="UniProtKB-UniRule"/>
</dbReference>
<dbReference type="GO" id="GO:0006281">
    <property type="term" value="P:DNA repair"/>
    <property type="evidence" value="ECO:0007669"/>
    <property type="project" value="UniProtKB-UniRule"/>
</dbReference>
<dbReference type="GO" id="GO:0043137">
    <property type="term" value="P:DNA replication, removal of RNA primer"/>
    <property type="evidence" value="ECO:0007669"/>
    <property type="project" value="UniProtKB-UniRule"/>
</dbReference>
<dbReference type="CDD" id="cd09903">
    <property type="entry name" value="H3TH_FEN1-Arc"/>
    <property type="match status" value="1"/>
</dbReference>
<dbReference type="CDD" id="cd09867">
    <property type="entry name" value="PIN_FEN1"/>
    <property type="match status" value="1"/>
</dbReference>
<dbReference type="FunFam" id="1.10.150.20:FF:000087">
    <property type="entry name" value="Flap endonuclease 1"/>
    <property type="match status" value="1"/>
</dbReference>
<dbReference type="FunFam" id="3.40.50.1010:FF:000016">
    <property type="entry name" value="Flap endonuclease 1"/>
    <property type="match status" value="1"/>
</dbReference>
<dbReference type="Gene3D" id="1.10.150.20">
    <property type="entry name" value="5' to 3' exonuclease, C-terminal subdomain"/>
    <property type="match status" value="1"/>
</dbReference>
<dbReference type="Gene3D" id="3.40.50.1010">
    <property type="entry name" value="5'-nuclease"/>
    <property type="match status" value="1"/>
</dbReference>
<dbReference type="HAMAP" id="MF_00614">
    <property type="entry name" value="Fen"/>
    <property type="match status" value="1"/>
</dbReference>
<dbReference type="InterPro" id="IPR036279">
    <property type="entry name" value="5-3_exonuclease_C_sf"/>
</dbReference>
<dbReference type="InterPro" id="IPR023426">
    <property type="entry name" value="Flap_endonuc"/>
</dbReference>
<dbReference type="InterPro" id="IPR019973">
    <property type="entry name" value="Flap_endonuc_arc"/>
</dbReference>
<dbReference type="InterPro" id="IPR008918">
    <property type="entry name" value="HhH2"/>
</dbReference>
<dbReference type="InterPro" id="IPR029060">
    <property type="entry name" value="PIN-like_dom_sf"/>
</dbReference>
<dbReference type="InterPro" id="IPR006086">
    <property type="entry name" value="XPG-I_dom"/>
</dbReference>
<dbReference type="InterPro" id="IPR006084">
    <property type="entry name" value="XPG/Rad2"/>
</dbReference>
<dbReference type="InterPro" id="IPR019974">
    <property type="entry name" value="XPG_CS"/>
</dbReference>
<dbReference type="InterPro" id="IPR006085">
    <property type="entry name" value="XPG_DNA_repair_N"/>
</dbReference>
<dbReference type="NCBIfam" id="TIGR03674">
    <property type="entry name" value="fen_arch"/>
    <property type="match status" value="1"/>
</dbReference>
<dbReference type="PANTHER" id="PTHR11081:SF9">
    <property type="entry name" value="FLAP ENDONUCLEASE 1"/>
    <property type="match status" value="1"/>
</dbReference>
<dbReference type="PANTHER" id="PTHR11081">
    <property type="entry name" value="FLAP ENDONUCLEASE FAMILY MEMBER"/>
    <property type="match status" value="1"/>
</dbReference>
<dbReference type="Pfam" id="PF00867">
    <property type="entry name" value="XPG_I"/>
    <property type="match status" value="1"/>
</dbReference>
<dbReference type="Pfam" id="PF00752">
    <property type="entry name" value="XPG_N"/>
    <property type="match status" value="1"/>
</dbReference>
<dbReference type="PRINTS" id="PR00853">
    <property type="entry name" value="XPGRADSUPER"/>
</dbReference>
<dbReference type="SMART" id="SM00279">
    <property type="entry name" value="HhH2"/>
    <property type="match status" value="1"/>
</dbReference>
<dbReference type="SMART" id="SM00484">
    <property type="entry name" value="XPGI"/>
    <property type="match status" value="1"/>
</dbReference>
<dbReference type="SMART" id="SM00485">
    <property type="entry name" value="XPGN"/>
    <property type="match status" value="1"/>
</dbReference>
<dbReference type="SUPFAM" id="SSF47807">
    <property type="entry name" value="5' to 3' exonuclease, C-terminal subdomain"/>
    <property type="match status" value="1"/>
</dbReference>
<dbReference type="SUPFAM" id="SSF88723">
    <property type="entry name" value="PIN domain-like"/>
    <property type="match status" value="1"/>
</dbReference>
<dbReference type="PROSITE" id="PS00841">
    <property type="entry name" value="XPG_1"/>
    <property type="match status" value="1"/>
</dbReference>
<gene>
    <name evidence="2" type="primary">fen</name>
    <name type="ordered locus">Pisl_0681</name>
</gene>
<proteinExistence type="inferred from homology"/>
<comment type="function">
    <text evidence="1">Structure-specific nuclease with 5'-flap endonuclease and 5'-3' exonuclease activities involved in DNA replication and repair. During DNA replication, cleaves the 5'-overhanging flap structure that is generated by displacement synthesis when DNA polymerase encounters the 5'-end of a downstream Okazaki fragment. Binds the unpaired 3'-DNA end and kinks the DNA to facilitate 5' cleavage specificity. Cleaves one nucleotide into the double-stranded DNA from the junction in flap DNA, leaving a nick for ligation. Also involved in the base excision repair (BER) pathway. Acts as a genome stabilization factor that prevents flaps from equilibrating into structures that lead to duplications and deletions. Also possesses 5'-3' exonuclease activity on nicked or gapped double-stranded DNA (By similarity).</text>
</comment>
<comment type="cofactor">
    <cofactor evidence="2">
        <name>Mg(2+)</name>
        <dbReference type="ChEBI" id="CHEBI:18420"/>
    </cofactor>
    <text evidence="2">Binds 2 magnesium ions per subunit. They probably participate in the reaction catalyzed by the enzyme. May bind an additional third magnesium ion after substrate binding.</text>
</comment>
<comment type="subunit">
    <text evidence="2">Interacts with PCNA. PCNA stimulates the nuclease activity without altering cleavage specificity.</text>
</comment>
<comment type="similarity">
    <text evidence="2">Belongs to the XPG/RAD2 endonuclease family. FEN1 subfamily.</text>
</comment>
<sequence>MGVTELGKLIGKDIRREVKLENLAGKCIALDAYNSLYQFLASIRQPDGTPLMDRVGRITSHLSGLFYRTINLMEAGIKPVYVFDGKPPEFKLAEIEERRKVKEKAMEEVLKAIKEGRKEDVAKYMKRAVFLTSDMVEDAKKLLTYMGVPWVQAPSEGEAQAAHMAKRGHCWAVGSQDYDSLLFGSPRLVRNLAVSPRRKIGEEVIELSPEIIELDAVLKSLRLKNREQLIDLAILLGTDYNPDGVPGVGPQKALKLVWEFGGLEKMLETVLRGVYFPVDPLEIKKFFLNPPVTDEYSTDIKKPDEQKLIDFLVREHDFSEDRVLKAVERLKRAQTKYKISSLDSFF</sequence>
<keyword id="KW-0227">DNA damage</keyword>
<keyword id="KW-0234">DNA repair</keyword>
<keyword id="KW-0235">DNA replication</keyword>
<keyword id="KW-0255">Endonuclease</keyword>
<keyword id="KW-0269">Exonuclease</keyword>
<keyword id="KW-0378">Hydrolase</keyword>
<keyword id="KW-0460">Magnesium</keyword>
<keyword id="KW-0479">Metal-binding</keyword>
<keyword id="KW-0540">Nuclease</keyword>